<dbReference type="EC" id="2.7.7.4" evidence="1"/>
<dbReference type="EMBL" id="BA000043">
    <property type="protein sequence ID" value="BAD74700.1"/>
    <property type="molecule type" value="Genomic_DNA"/>
</dbReference>
<dbReference type="RefSeq" id="WP_011229919.1">
    <property type="nucleotide sequence ID" value="NC_006510.1"/>
</dbReference>
<dbReference type="SMR" id="Q5L2Y0"/>
<dbReference type="STRING" id="235909.GK0415"/>
<dbReference type="GeneID" id="32062384"/>
<dbReference type="KEGG" id="gka:GK0415"/>
<dbReference type="eggNOG" id="COG2046">
    <property type="taxonomic scope" value="Bacteria"/>
</dbReference>
<dbReference type="HOGENOM" id="CLU_022950_1_1_9"/>
<dbReference type="UniPathway" id="UPA00140">
    <property type="reaction ID" value="UER00204"/>
</dbReference>
<dbReference type="Proteomes" id="UP000001172">
    <property type="component" value="Chromosome"/>
</dbReference>
<dbReference type="GO" id="GO:0005524">
    <property type="term" value="F:ATP binding"/>
    <property type="evidence" value="ECO:0007669"/>
    <property type="project" value="UniProtKB-KW"/>
</dbReference>
<dbReference type="GO" id="GO:0004781">
    <property type="term" value="F:sulfate adenylyltransferase (ATP) activity"/>
    <property type="evidence" value="ECO:0007669"/>
    <property type="project" value="UniProtKB-UniRule"/>
</dbReference>
<dbReference type="GO" id="GO:0070814">
    <property type="term" value="P:hydrogen sulfide biosynthetic process"/>
    <property type="evidence" value="ECO:0007669"/>
    <property type="project" value="UniProtKB-UniRule"/>
</dbReference>
<dbReference type="GO" id="GO:0000103">
    <property type="term" value="P:sulfate assimilation"/>
    <property type="evidence" value="ECO:0007669"/>
    <property type="project" value="UniProtKB-UniRule"/>
</dbReference>
<dbReference type="CDD" id="cd00517">
    <property type="entry name" value="ATPS"/>
    <property type="match status" value="1"/>
</dbReference>
<dbReference type="Gene3D" id="3.40.50.620">
    <property type="entry name" value="HUPs"/>
    <property type="match status" value="1"/>
</dbReference>
<dbReference type="Gene3D" id="3.10.400.10">
    <property type="entry name" value="Sulfate adenylyltransferase"/>
    <property type="match status" value="1"/>
</dbReference>
<dbReference type="HAMAP" id="MF_00066">
    <property type="entry name" value="Sulf_adenylyltr"/>
    <property type="match status" value="1"/>
</dbReference>
<dbReference type="InterPro" id="IPR025980">
    <property type="entry name" value="ATP-Sase_PUA-like_dom"/>
</dbReference>
<dbReference type="InterPro" id="IPR015947">
    <property type="entry name" value="PUA-like_sf"/>
</dbReference>
<dbReference type="InterPro" id="IPR014729">
    <property type="entry name" value="Rossmann-like_a/b/a_fold"/>
</dbReference>
<dbReference type="InterPro" id="IPR020792">
    <property type="entry name" value="SO4_adenylyltransferase_pro"/>
</dbReference>
<dbReference type="InterPro" id="IPR024951">
    <property type="entry name" value="Sulfurylase_cat_dom"/>
</dbReference>
<dbReference type="InterPro" id="IPR002650">
    <property type="entry name" value="Sulphate_adenylyltransferase"/>
</dbReference>
<dbReference type="NCBIfam" id="NF003166">
    <property type="entry name" value="PRK04149.1"/>
    <property type="match status" value="1"/>
</dbReference>
<dbReference type="NCBIfam" id="TIGR00339">
    <property type="entry name" value="sopT"/>
    <property type="match status" value="1"/>
</dbReference>
<dbReference type="PANTHER" id="PTHR43509">
    <property type="match status" value="1"/>
</dbReference>
<dbReference type="PANTHER" id="PTHR43509:SF1">
    <property type="entry name" value="SULFATE ADENYLYLTRANSFERASE"/>
    <property type="match status" value="1"/>
</dbReference>
<dbReference type="Pfam" id="PF01747">
    <property type="entry name" value="ATP-sulfurylase"/>
    <property type="match status" value="1"/>
</dbReference>
<dbReference type="Pfam" id="PF14306">
    <property type="entry name" value="PUA_2"/>
    <property type="match status" value="1"/>
</dbReference>
<dbReference type="SUPFAM" id="SSF52374">
    <property type="entry name" value="Nucleotidylyl transferase"/>
    <property type="match status" value="1"/>
</dbReference>
<dbReference type="SUPFAM" id="SSF88697">
    <property type="entry name" value="PUA domain-like"/>
    <property type="match status" value="1"/>
</dbReference>
<evidence type="ECO:0000255" key="1">
    <source>
        <dbReference type="HAMAP-Rule" id="MF_00066"/>
    </source>
</evidence>
<protein>
    <recommendedName>
        <fullName evidence="1">Sulfate adenylyltransferase</fullName>
        <ecNumber evidence="1">2.7.7.4</ecNumber>
    </recommendedName>
    <alternativeName>
        <fullName evidence="1">ATP-sulfurylase</fullName>
    </alternativeName>
    <alternativeName>
        <fullName evidence="1">Sulfate adenylate transferase</fullName>
        <shortName evidence="1">SAT</shortName>
    </alternativeName>
</protein>
<keyword id="KW-0067">ATP-binding</keyword>
<keyword id="KW-0547">Nucleotide-binding</keyword>
<keyword id="KW-0548">Nucleotidyltransferase</keyword>
<keyword id="KW-1185">Reference proteome</keyword>
<keyword id="KW-0808">Transferase</keyword>
<organism>
    <name type="scientific">Geobacillus kaustophilus (strain HTA426)</name>
    <dbReference type="NCBI Taxonomy" id="235909"/>
    <lineage>
        <taxon>Bacteria</taxon>
        <taxon>Bacillati</taxon>
        <taxon>Bacillota</taxon>
        <taxon>Bacilli</taxon>
        <taxon>Bacillales</taxon>
        <taxon>Anoxybacillaceae</taxon>
        <taxon>Geobacillus</taxon>
        <taxon>Geobacillus thermoleovorans group</taxon>
    </lineage>
</organism>
<reference key="1">
    <citation type="journal article" date="2004" name="Nucleic Acids Res.">
        <title>Thermoadaptation trait revealed by the genome sequence of thermophilic Geobacillus kaustophilus.</title>
        <authorList>
            <person name="Takami H."/>
            <person name="Takaki Y."/>
            <person name="Chee G.-J."/>
            <person name="Nishi S."/>
            <person name="Shimamura S."/>
            <person name="Suzuki H."/>
            <person name="Matsui S."/>
            <person name="Uchiyama I."/>
        </authorList>
    </citation>
    <scope>NUCLEOTIDE SEQUENCE [LARGE SCALE GENOMIC DNA]</scope>
    <source>
        <strain>HTA426</strain>
    </source>
</reference>
<name>SAT_GEOKA</name>
<comment type="catalytic activity">
    <reaction evidence="1">
        <text>sulfate + ATP + H(+) = adenosine 5'-phosphosulfate + diphosphate</text>
        <dbReference type="Rhea" id="RHEA:18133"/>
        <dbReference type="ChEBI" id="CHEBI:15378"/>
        <dbReference type="ChEBI" id="CHEBI:16189"/>
        <dbReference type="ChEBI" id="CHEBI:30616"/>
        <dbReference type="ChEBI" id="CHEBI:33019"/>
        <dbReference type="ChEBI" id="CHEBI:58243"/>
        <dbReference type="EC" id="2.7.7.4"/>
    </reaction>
</comment>
<comment type="pathway">
    <text evidence="1">Sulfur metabolism; hydrogen sulfide biosynthesis; sulfite from sulfate: step 1/3.</text>
</comment>
<comment type="similarity">
    <text evidence="1">Belongs to the sulfate adenylyltransferase family.</text>
</comment>
<sequence length="386" mass="43279">MSVSIPHGGTLINRWNPDYPLDEATKTIELSKAELSDLELIGTGAYSPLTGFLTKTDYDAVVETMRLSDGTVWSIPITLAVTEEKAKELAVGDKAKLVYRGDVYGVIEIADIYRPDKTKEAKLVYKTDELAHPGVRKLFEKPDVYVGGEITLVKRTDKGQFASFYFDPAETRKKFAEFGWNTVVGFQTRNPVHRAHEYIQKCALEIVDGLFLNPLVGETKADDIPADIRMESYQVLLENYYPKDRVFLGVFQAAMRYAGPREAIFHAMVRKNFGCTHFIVGRDHAGVGNYYGTYDAQKIFLNFTAEELGITPLFFEHSFYCTKCEGMASTKTCPHDAKYHVVLSGTKVREMLRNGQVPPSTFSRPEVAAVLIKGLQERETVAPSAR</sequence>
<feature type="chain" id="PRO_0000340621" description="Sulfate adenylyltransferase">
    <location>
        <begin position="1"/>
        <end position="386"/>
    </location>
</feature>
<gene>
    <name evidence="1" type="primary">sat</name>
    <name type="ordered locus">GK0415</name>
</gene>
<accession>Q5L2Y0</accession>
<proteinExistence type="inferred from homology"/>